<feature type="chain" id="PRO_0000326967" description="Protoheme IX farnesyltransferase">
    <location>
        <begin position="1"/>
        <end position="299"/>
    </location>
</feature>
<feature type="transmembrane region" description="Helical" evidence="1">
    <location>
        <begin position="27"/>
        <end position="47"/>
    </location>
</feature>
<feature type="transmembrane region" description="Helical" evidence="1">
    <location>
        <begin position="53"/>
        <end position="73"/>
    </location>
</feature>
<feature type="transmembrane region" description="Helical" evidence="1">
    <location>
        <begin position="97"/>
        <end position="117"/>
    </location>
</feature>
<feature type="transmembrane region" description="Helical" evidence="1">
    <location>
        <begin position="121"/>
        <end position="141"/>
    </location>
</feature>
<feature type="transmembrane region" description="Helical" evidence="1">
    <location>
        <begin position="149"/>
        <end position="169"/>
    </location>
</feature>
<feature type="transmembrane region" description="Helical" evidence="1">
    <location>
        <begin position="175"/>
        <end position="195"/>
    </location>
</feature>
<feature type="transmembrane region" description="Helical" evidence="1">
    <location>
        <begin position="222"/>
        <end position="242"/>
    </location>
</feature>
<feature type="transmembrane region" description="Helical" evidence="1">
    <location>
        <begin position="244"/>
        <end position="264"/>
    </location>
</feature>
<feature type="transmembrane region" description="Helical" evidence="1">
    <location>
        <begin position="273"/>
        <end position="293"/>
    </location>
</feature>
<name>CYOE_VIBVY</name>
<protein>
    <recommendedName>
        <fullName evidence="1">Protoheme IX farnesyltransferase</fullName>
        <ecNumber evidence="1">2.5.1.141</ecNumber>
    </recommendedName>
    <alternativeName>
        <fullName evidence="1">Heme B farnesyltransferase</fullName>
    </alternativeName>
    <alternativeName>
        <fullName evidence="1">Heme O synthase</fullName>
    </alternativeName>
</protein>
<accession>Q7MDC8</accession>
<evidence type="ECO:0000255" key="1">
    <source>
        <dbReference type="HAMAP-Rule" id="MF_00154"/>
    </source>
</evidence>
<organism>
    <name type="scientific">Vibrio vulnificus (strain YJ016)</name>
    <dbReference type="NCBI Taxonomy" id="196600"/>
    <lineage>
        <taxon>Bacteria</taxon>
        <taxon>Pseudomonadati</taxon>
        <taxon>Pseudomonadota</taxon>
        <taxon>Gammaproteobacteria</taxon>
        <taxon>Vibrionales</taxon>
        <taxon>Vibrionaceae</taxon>
        <taxon>Vibrio</taxon>
    </lineage>
</organism>
<comment type="function">
    <text evidence="1">Converts heme B (protoheme IX) to heme O by substitution of the vinyl group on carbon 2 of heme B porphyrin ring with a hydroxyethyl farnesyl side group.</text>
</comment>
<comment type="catalytic activity">
    <reaction evidence="1">
        <text>heme b + (2E,6E)-farnesyl diphosphate + H2O = Fe(II)-heme o + diphosphate</text>
        <dbReference type="Rhea" id="RHEA:28070"/>
        <dbReference type="ChEBI" id="CHEBI:15377"/>
        <dbReference type="ChEBI" id="CHEBI:33019"/>
        <dbReference type="ChEBI" id="CHEBI:60344"/>
        <dbReference type="ChEBI" id="CHEBI:60530"/>
        <dbReference type="ChEBI" id="CHEBI:175763"/>
        <dbReference type="EC" id="2.5.1.141"/>
    </reaction>
</comment>
<comment type="pathway">
    <text evidence="1">Porphyrin-containing compound metabolism; heme O biosynthesis; heme O from protoheme: step 1/1.</text>
</comment>
<comment type="subcellular location">
    <subcellularLocation>
        <location evidence="1">Cell inner membrane</location>
        <topology evidence="1">Multi-pass membrane protein</topology>
    </subcellularLocation>
</comment>
<comment type="miscellaneous">
    <text evidence="1">Carbon 2 of the heme B porphyrin ring is defined according to the Fischer nomenclature.</text>
</comment>
<comment type="similarity">
    <text evidence="1">Belongs to the UbiA prenyltransferase family. Protoheme IX farnesyltransferase subfamily.</text>
</comment>
<dbReference type="EC" id="2.5.1.141" evidence="1"/>
<dbReference type="EMBL" id="BA000038">
    <property type="protein sequence ID" value="BAC97134.1"/>
    <property type="molecule type" value="Genomic_DNA"/>
</dbReference>
<dbReference type="RefSeq" id="WP_011152381.1">
    <property type="nucleotide sequence ID" value="NC_005140.1"/>
</dbReference>
<dbReference type="SMR" id="Q7MDC8"/>
<dbReference type="STRING" id="672.VV93_v1c40470"/>
<dbReference type="KEGG" id="vvy:VVA1108"/>
<dbReference type="PATRIC" id="fig|196600.6.peg.4273"/>
<dbReference type="eggNOG" id="COG0109">
    <property type="taxonomic scope" value="Bacteria"/>
</dbReference>
<dbReference type="HOGENOM" id="CLU_029631_0_2_6"/>
<dbReference type="UniPathway" id="UPA00834">
    <property type="reaction ID" value="UER00712"/>
</dbReference>
<dbReference type="Proteomes" id="UP000002675">
    <property type="component" value="Chromosome II"/>
</dbReference>
<dbReference type="GO" id="GO:0005886">
    <property type="term" value="C:plasma membrane"/>
    <property type="evidence" value="ECO:0007669"/>
    <property type="project" value="UniProtKB-SubCell"/>
</dbReference>
<dbReference type="GO" id="GO:0008495">
    <property type="term" value="F:protoheme IX farnesyltransferase activity"/>
    <property type="evidence" value="ECO:0007669"/>
    <property type="project" value="UniProtKB-UniRule"/>
</dbReference>
<dbReference type="GO" id="GO:0048034">
    <property type="term" value="P:heme O biosynthetic process"/>
    <property type="evidence" value="ECO:0007669"/>
    <property type="project" value="UniProtKB-UniRule"/>
</dbReference>
<dbReference type="CDD" id="cd13957">
    <property type="entry name" value="PT_UbiA_Cox10"/>
    <property type="match status" value="1"/>
</dbReference>
<dbReference type="FunFam" id="1.10.357.140:FF:000001">
    <property type="entry name" value="Protoheme IX farnesyltransferase"/>
    <property type="match status" value="1"/>
</dbReference>
<dbReference type="Gene3D" id="1.10.357.140">
    <property type="entry name" value="UbiA prenyltransferase"/>
    <property type="match status" value="1"/>
</dbReference>
<dbReference type="HAMAP" id="MF_00154">
    <property type="entry name" value="CyoE_CtaB"/>
    <property type="match status" value="1"/>
</dbReference>
<dbReference type="InterPro" id="IPR006369">
    <property type="entry name" value="Protohaem_IX_farnesylTrfase"/>
</dbReference>
<dbReference type="InterPro" id="IPR000537">
    <property type="entry name" value="UbiA_prenyltransferase"/>
</dbReference>
<dbReference type="InterPro" id="IPR030470">
    <property type="entry name" value="UbiA_prenylTrfase_CS"/>
</dbReference>
<dbReference type="InterPro" id="IPR044878">
    <property type="entry name" value="UbiA_sf"/>
</dbReference>
<dbReference type="NCBIfam" id="TIGR01473">
    <property type="entry name" value="cyoE_ctaB"/>
    <property type="match status" value="1"/>
</dbReference>
<dbReference type="NCBIfam" id="NF003349">
    <property type="entry name" value="PRK04375.1-2"/>
    <property type="match status" value="1"/>
</dbReference>
<dbReference type="PANTHER" id="PTHR43448:SF7">
    <property type="entry name" value="4-HYDROXYBENZOATE SOLANESYLTRANSFERASE"/>
    <property type="match status" value="1"/>
</dbReference>
<dbReference type="PANTHER" id="PTHR43448">
    <property type="entry name" value="PROTOHEME IX FARNESYLTRANSFERASE, MITOCHONDRIAL"/>
    <property type="match status" value="1"/>
</dbReference>
<dbReference type="Pfam" id="PF01040">
    <property type="entry name" value="UbiA"/>
    <property type="match status" value="1"/>
</dbReference>
<dbReference type="PROSITE" id="PS00943">
    <property type="entry name" value="UBIA"/>
    <property type="match status" value="1"/>
</dbReference>
<sequence>MSKTLSVDKSQLRSPWSTYWTLTKPKVVALMLLTSVVGMSLAPHEHFTWHQALIALVGIALMAGSAAAFNHLIDRRIDAKMARTYRRPLPKGDVSPFNVLLFALLIGSLGFLSLMLWVNSLTAYLTFASLLGYAVVYTLYLKRATPQNIVIAGIAGAMPPLLGWTSITGELHPHAWLLVMIIFIWTPPHFWALAIHRKEDYAKVNIPMLPVTHGVEYTKTSILLYAILLALVCMLPVLVGMASYLYLFSALVLNVCFVRYAIKLKFRAEERTAIEMFRFSIYFLLLLFCALLLDQQLAL</sequence>
<gene>
    <name evidence="1" type="primary">cyoE</name>
    <name type="ordered locus">VVA1108</name>
</gene>
<proteinExistence type="inferred from homology"/>
<reference key="1">
    <citation type="journal article" date="2003" name="Genome Res.">
        <title>Comparative genome analysis of Vibrio vulnificus, a marine pathogen.</title>
        <authorList>
            <person name="Chen C.-Y."/>
            <person name="Wu K.-M."/>
            <person name="Chang Y.-C."/>
            <person name="Chang C.-H."/>
            <person name="Tsai H.-C."/>
            <person name="Liao T.-L."/>
            <person name="Liu Y.-M."/>
            <person name="Chen H.-J."/>
            <person name="Shen A.B.-T."/>
            <person name="Li J.-C."/>
            <person name="Su T.-L."/>
            <person name="Shao C.-P."/>
            <person name="Lee C.-T."/>
            <person name="Hor L.-I."/>
            <person name="Tsai S.-F."/>
        </authorList>
    </citation>
    <scope>NUCLEOTIDE SEQUENCE [LARGE SCALE GENOMIC DNA]</scope>
    <source>
        <strain>YJ016</strain>
    </source>
</reference>
<keyword id="KW-0997">Cell inner membrane</keyword>
<keyword id="KW-1003">Cell membrane</keyword>
<keyword id="KW-0350">Heme biosynthesis</keyword>
<keyword id="KW-0472">Membrane</keyword>
<keyword id="KW-0808">Transferase</keyword>
<keyword id="KW-0812">Transmembrane</keyword>
<keyword id="KW-1133">Transmembrane helix</keyword>